<comment type="function">
    <text evidence="3 4">Major tegument protein that participates in the egress of nucleocapsids from the host nucleus. May be involved in host nucleus-cytoplasm transportation of nucleocapsids to form budded virion (BVs).</text>
</comment>
<comment type="subunit">
    <text evidence="3">Homooligomer. Homotrimer. Forms oligomers in infected cells, while selectively assembles as trimers into progeny virions.</text>
</comment>
<comment type="subcellular location">
    <subcellularLocation>
        <location evidence="3 4">Virion</location>
    </subcellularLocation>
    <subcellularLocation>
        <location evidence="6">Host nucleus</location>
    </subcellularLocation>
    <text evidence="3">Localizes in both the budded virions (BVs) and occlusion-derived virions (ODVs) but amount in BVs is much lower than that in ODVs.</text>
</comment>
<comment type="developmental stage">
    <text>Associated with the polyhedron-derived virus (occluded virus).</text>
</comment>
<comment type="PTM">
    <text evidence="2">O-glycosylated; by N-acetylglucosamine at one or more locations.</text>
</comment>
<comment type="similarity">
    <text evidence="5">Belongs to the baculoviridae gp41 family.</text>
</comment>
<protein>
    <recommendedName>
        <fullName>Structural glycoprotein gp41</fullName>
    </recommendedName>
</protein>
<dbReference type="EMBL" id="M86592">
    <property type="protein sequence ID" value="AAA46695.1"/>
    <property type="molecule type" value="Genomic_DNA"/>
</dbReference>
<dbReference type="EMBL" id="X71415">
    <property type="protein sequence ID" value="CAA50543.1"/>
    <property type="molecule type" value="Genomic_DNA"/>
</dbReference>
<dbReference type="EMBL" id="L22858">
    <property type="protein sequence ID" value="AAA66710.1"/>
    <property type="molecule type" value="Genomic_DNA"/>
</dbReference>
<dbReference type="PIR" id="A42738">
    <property type="entry name" value="WMNV41"/>
</dbReference>
<dbReference type="PIR" id="A72860">
    <property type="entry name" value="A72860"/>
</dbReference>
<dbReference type="PIR" id="S36696">
    <property type="entry name" value="S36696"/>
</dbReference>
<dbReference type="GlyCosmos" id="P32651">
    <property type="glycosylation" value="1 site, No reported glycans"/>
</dbReference>
<dbReference type="KEGG" id="vg:1403913"/>
<dbReference type="OrthoDB" id="3665at10239"/>
<dbReference type="Proteomes" id="UP000008292">
    <property type="component" value="Segment"/>
</dbReference>
<dbReference type="GO" id="GO:0042025">
    <property type="term" value="C:host cell nucleus"/>
    <property type="evidence" value="ECO:0007669"/>
    <property type="project" value="UniProtKB-SubCell"/>
</dbReference>
<dbReference type="GO" id="GO:0044423">
    <property type="term" value="C:virion component"/>
    <property type="evidence" value="ECO:0007669"/>
    <property type="project" value="UniProtKB-KW"/>
</dbReference>
<dbReference type="GO" id="GO:0005198">
    <property type="term" value="F:structural molecule activity"/>
    <property type="evidence" value="ECO:0007669"/>
    <property type="project" value="InterPro"/>
</dbReference>
<dbReference type="InterPro" id="IPR006790">
    <property type="entry name" value="Baculovirus_Gp41"/>
</dbReference>
<dbReference type="Pfam" id="PF04700">
    <property type="entry name" value="Baculo_gp41"/>
    <property type="match status" value="1"/>
</dbReference>
<organismHost>
    <name type="scientific">Lepidoptera</name>
    <name type="common">butterflies and moths</name>
    <dbReference type="NCBI Taxonomy" id="7088"/>
</organismHost>
<gene>
    <name type="primary">GP41</name>
</gene>
<keyword id="KW-0325">Glycoprotein</keyword>
<keyword id="KW-1048">Host nucleus</keyword>
<keyword id="KW-0426">Late protein</keyword>
<keyword id="KW-1185">Reference proteome</keyword>
<keyword id="KW-0946">Virion</keyword>
<name>GP41_NPVAC</name>
<evidence type="ECO:0000255" key="1"/>
<evidence type="ECO:0000269" key="2">
    <source>
    </source>
</evidence>
<evidence type="ECO:0000269" key="3">
    <source>
    </source>
</evidence>
<evidence type="ECO:0000269" key="4">
    <source>
    </source>
</evidence>
<evidence type="ECO:0000305" key="5"/>
<evidence type="ECO:0000305" key="6">
    <source>
    </source>
</evidence>
<proteinExistence type="evidence at protein level"/>
<sequence>MTDERGNFYYNTPPPLRYPSNPATAIFTSAQTYNAPGYVPPATVPTTVATRDNRMDYTSRSNSTNSVAIAPYNKSKEPTLDAGESIWYNKCVDFVQKIIRYYRCNDMSELSPLMILFINTIRDMCIDTNPISVNVVKRFESEETMIRHLIRLQKELGQSNAAESLSSDSNIFQPSFVLNSLPAYAQKFYNGGADMLGKDALAEAAKQLSLAVQYMVAEAVTCNIPIPLPFNQQLANNYMTLLLKHATLPPNIQSAVESRRFPHINMINDLINAVIDDLFAGGGDYYHYVLNEKNRARVMSLKENVAFLAPLSASANIFNYMAELATRAGKQPSMFQNATFLTSAANAVNSPAAHLTKSACQESLTELAFQNETLRRFIFQQINYNKDANAIIAAAAPNATRPNTKGRTA</sequence>
<feature type="chain" id="PRO_0000132903" description="Structural glycoprotein gp41">
    <location>
        <begin position="1"/>
        <end position="409"/>
    </location>
</feature>
<feature type="region of interest" description="Leucine zipper 1 (LZ1)" evidence="3">
    <location>
        <begin position="201"/>
        <end position="214"/>
    </location>
</feature>
<feature type="region of interest" description="Leucine zipper 2 (LZ2)" evidence="3">
    <location>
        <begin position="367"/>
        <end position="380"/>
    </location>
</feature>
<feature type="glycosylation site" description="O-linked (GlcNAc) threonine; by host" evidence="1">
    <location>
        <position position="128"/>
    </location>
</feature>
<feature type="sequence conflict" description="In Ref. 2." evidence="5" ref="2">
    <original>A</original>
    <variation>V</variation>
    <location>
        <position position="193"/>
    </location>
</feature>
<feature type="sequence conflict" description="In Ref. 1; AAA46695." evidence="5" ref="1">
    <original>ANAVNSPAAHLTKSACQESLTELAFQNETLRRFIFQQINYNKDANAIIAAAAPNATRPNTKGRTA</original>
    <variation>PTRSIRRPLI</variation>
    <location>
        <begin position="345"/>
        <end position="409"/>
    </location>
</feature>
<feature type="sequence conflict" description="In Ref. 2." evidence="5" ref="2">
    <original>PNATRPNTKGRTA</original>
    <variation>R</variation>
    <location>
        <begin position="397"/>
        <end position="409"/>
    </location>
</feature>
<accession>P32651</accession>
<reference key="1">
    <citation type="journal article" date="1992" name="J. Virol.">
        <title>Nucleotide sequence and transcriptional analysis of a gene encoding gp41, a structural glycoprotein of the baculovirus Autographa californica nuclear polyhedrosis virus.</title>
        <authorList>
            <person name="Whitford M."/>
            <person name="Faulkner P."/>
        </authorList>
    </citation>
    <scope>NUCLEOTIDE SEQUENCE [GENOMIC DNA]</scope>
    <source>
        <strain>HR3</strain>
    </source>
</reference>
<reference key="2">
    <citation type="journal article" date="1994" name="J. Gen. Virol.">
        <title>Nucleotide sequence and genetic organization of a 7.3 kb region (map unit 47 to 52.5) of Autographa californica nuclear polyhedrosis virus fragment EcoRI-C.</title>
        <authorList>
            <person name="Kool M."/>
            <person name="Broer R."/>
            <person name="Zuidema D."/>
            <person name="Goldbach R.W."/>
            <person name="Vlak J.M."/>
        </authorList>
    </citation>
    <scope>NUCLEOTIDE SEQUENCE [GENOMIC DNA]</scope>
    <source>
        <strain>E2</strain>
    </source>
</reference>
<reference key="3">
    <citation type="journal article" date="1994" name="Virology">
        <title>The complete DNA sequence of Autographa californica nuclear polyhedrosis virus.</title>
        <authorList>
            <person name="Ayres M.D."/>
            <person name="Howard S.C."/>
            <person name="Kuzio J."/>
            <person name="Lopez-Ferber M."/>
            <person name="Possee R.D."/>
        </authorList>
    </citation>
    <scope>NUCLEOTIDE SEQUENCE [LARGE SCALE GENOMIC DNA]</scope>
    <source>
        <strain>C6</strain>
    </source>
</reference>
<reference key="4">
    <citation type="journal article" date="1992" name="J. Virol.">
        <title>A structural polypeptide of the baculovirus Autographa californica nuclear polyhedrosis virus contains O-linked N-acetylglucosamine.</title>
        <authorList>
            <person name="Whitford M."/>
            <person name="Faulkner P."/>
        </authorList>
    </citation>
    <scope>GLYCOSYLATION</scope>
</reference>
<reference key="5">
    <citation type="journal article" date="1997" name="Virology">
        <title>A role for baculovirus GP41 in budded virus production.</title>
        <authorList>
            <person name="Olszewski J."/>
            <person name="Miller L.K."/>
        </authorList>
    </citation>
    <scope>SUBCELLULAR LOCATION</scope>
    <scope>FUNCTION</scope>
</reference>
<reference key="6">
    <citation type="journal article" date="2018" name="J. Virol.">
        <title>The functional oligomeric state of tegument protein GP41 is essential for baculovirus BV and ODV assembly.</title>
        <authorList>
            <person name="Li Y."/>
            <person name="Shen S."/>
            <person name="Hu L."/>
            <person name="Deng F."/>
            <person name="Vlak J.M."/>
            <person name="Hu Z."/>
            <person name="Wang H."/>
            <person name="Wang M."/>
        </authorList>
    </citation>
    <scope>FUNCTION</scope>
    <scope>SUBUNIT</scope>
    <scope>SUBCELLULAR LOCATION</scope>
    <scope>REGION</scope>
</reference>
<organism>
    <name type="scientific">Autographa californica nuclear polyhedrosis virus</name>
    <name type="common">AcMNPV</name>
    <dbReference type="NCBI Taxonomy" id="46015"/>
    <lineage>
        <taxon>Viruses</taxon>
        <taxon>Viruses incertae sedis</taxon>
        <taxon>Naldaviricetes</taxon>
        <taxon>Lefavirales</taxon>
        <taxon>Baculoviridae</taxon>
        <taxon>Alphabaculovirus</taxon>
        <taxon>Alphabaculovirus aucalifornicae</taxon>
    </lineage>
</organism>